<accession>Q4UN46</accession>
<organism>
    <name type="scientific">Rickettsia felis (strain ATCC VR-1525 / URRWXCal2)</name>
    <name type="common">Rickettsia azadi</name>
    <dbReference type="NCBI Taxonomy" id="315456"/>
    <lineage>
        <taxon>Bacteria</taxon>
        <taxon>Pseudomonadati</taxon>
        <taxon>Pseudomonadota</taxon>
        <taxon>Alphaproteobacteria</taxon>
        <taxon>Rickettsiales</taxon>
        <taxon>Rickettsiaceae</taxon>
        <taxon>Rickettsieae</taxon>
        <taxon>Rickettsia</taxon>
        <taxon>spotted fever group</taxon>
    </lineage>
</organism>
<feature type="chain" id="PRO_0000286479" description="ADP,ATP carrier protein 5">
    <location>
        <begin position="1"/>
        <end position="499"/>
    </location>
</feature>
<feature type="transmembrane region" description="Helical" evidence="2">
    <location>
        <begin position="25"/>
        <end position="45"/>
    </location>
</feature>
<feature type="transmembrane region" description="Helical" evidence="2">
    <location>
        <begin position="61"/>
        <end position="81"/>
    </location>
</feature>
<feature type="transmembrane region" description="Helical" evidence="2">
    <location>
        <begin position="93"/>
        <end position="113"/>
    </location>
</feature>
<feature type="transmembrane region" description="Helical" evidence="2">
    <location>
        <begin position="148"/>
        <end position="168"/>
    </location>
</feature>
<feature type="transmembrane region" description="Helical" evidence="2">
    <location>
        <begin position="183"/>
        <end position="203"/>
    </location>
</feature>
<feature type="transmembrane region" description="Helical" evidence="2">
    <location>
        <begin position="223"/>
        <end position="243"/>
    </location>
</feature>
<feature type="transmembrane region" description="Helical" evidence="2">
    <location>
        <begin position="286"/>
        <end position="306"/>
    </location>
</feature>
<feature type="transmembrane region" description="Helical" evidence="2">
    <location>
        <begin position="327"/>
        <end position="347"/>
    </location>
</feature>
<feature type="transmembrane region" description="Helical" evidence="2">
    <location>
        <begin position="356"/>
        <end position="376"/>
    </location>
</feature>
<feature type="transmembrane region" description="Helical" evidence="2">
    <location>
        <begin position="380"/>
        <end position="400"/>
    </location>
</feature>
<feature type="transmembrane region" description="Helical" evidence="2">
    <location>
        <begin position="468"/>
        <end position="488"/>
    </location>
</feature>
<sequence length="499" mass="56856">MLSTSSRSFKSKFRAAFWPVHNYELGKFIPMSALMFCILFNQNILRILKDSILISEISAEIAGFAKVYCVTPAAALFVIIYAKMINRFTFEKIFYYLSAFFISFFVLFAFVIYPNIHVFHVHPDNLADWMERYPHFKWYISLVGNWGYIVYYSLAELWPNIFYVLLFWQFANELTTTEEAKRFYTFFSLFGNSSLILVGFLMMNLSSEDTIIKKFMSISDSKITLVQVSTTIVAIVAIVCCVLVRFISKNVFTNPLFYAKAKSGRSTSERMGLIKSFKYIAKSKYLWLLLICSAAFGFAINLVEAVWKAKIKELYPTVNTYAEFNSLYILWTGVAIMVMTIIGNNVMRMHNWFVAAVISPVIIMVTGILFFVLIVFDQQILSLFDGAILMSPLALAVSIGGIQNILAKGTKYSIWDTSREMLYIPLDDELKTKGKAAVDVISAKVGKSSSGLVQSIIFTLVPTATFTSISPILMVVFTFVCLAWIYAVRKIYFEYQKIA</sequence>
<protein>
    <recommendedName>
        <fullName>ADP,ATP carrier protein 5</fullName>
    </recommendedName>
    <alternativeName>
        <fullName>ADP/ATP translocase 5</fullName>
    </alternativeName>
</protein>
<name>TLCE_RICFE</name>
<proteinExistence type="inferred from homology"/>
<gene>
    <name type="primary">tlcE</name>
    <name type="synonym">tlc5</name>
    <name type="ordered locus">RF_0161</name>
</gene>
<evidence type="ECO:0000250" key="1"/>
<evidence type="ECO:0000255" key="2"/>
<evidence type="ECO:0000305" key="3"/>
<reference key="1">
    <citation type="journal article" date="2005" name="PLoS Biol.">
        <title>The genome sequence of Rickettsia felis identifies the first putative conjugative plasmid in an obligate intracellular parasite.</title>
        <authorList>
            <person name="Ogata H."/>
            <person name="Renesto P."/>
            <person name="Audic S."/>
            <person name="Robert C."/>
            <person name="Blanc G."/>
            <person name="Fournier P.-E."/>
            <person name="Parinello H."/>
            <person name="Claverie J.-M."/>
            <person name="Raoult D."/>
        </authorList>
    </citation>
    <scope>NUCLEOTIDE SEQUENCE [LARGE SCALE GENOMIC DNA]</scope>
    <source>
        <strain>ATCC VR-1525 / URRWXCal2</strain>
    </source>
</reference>
<comment type="function">
    <text evidence="1">Provides the rickettsial cell with host ATP in exchange for rickettsial ADP. This is an obligate exchange system. This energy acquiring activity is an important component of rickettsial parasitism (By similarity).</text>
</comment>
<comment type="subcellular location">
    <subcellularLocation>
        <location>Cell membrane</location>
        <topology>Multi-pass membrane protein</topology>
    </subcellularLocation>
</comment>
<comment type="similarity">
    <text evidence="3">Belongs to the ADP/ATP translocase tlc family.</text>
</comment>
<keyword id="KW-0067">ATP-binding</keyword>
<keyword id="KW-1003">Cell membrane</keyword>
<keyword id="KW-0472">Membrane</keyword>
<keyword id="KW-0547">Nucleotide-binding</keyword>
<keyword id="KW-0812">Transmembrane</keyword>
<keyword id="KW-1133">Transmembrane helix</keyword>
<keyword id="KW-0813">Transport</keyword>
<dbReference type="EMBL" id="CP000053">
    <property type="protein sequence ID" value="AAY61012.1"/>
    <property type="molecule type" value="Genomic_DNA"/>
</dbReference>
<dbReference type="STRING" id="315456.RF_0161"/>
<dbReference type="KEGG" id="rfe:RF_0161"/>
<dbReference type="eggNOG" id="COG3202">
    <property type="taxonomic scope" value="Bacteria"/>
</dbReference>
<dbReference type="HOGENOM" id="CLU_023964_0_1_5"/>
<dbReference type="OrthoDB" id="19786at2"/>
<dbReference type="Proteomes" id="UP000008548">
    <property type="component" value="Chromosome"/>
</dbReference>
<dbReference type="GO" id="GO:0005886">
    <property type="term" value="C:plasma membrane"/>
    <property type="evidence" value="ECO:0007669"/>
    <property type="project" value="UniProtKB-SubCell"/>
</dbReference>
<dbReference type="GO" id="GO:0005524">
    <property type="term" value="F:ATP binding"/>
    <property type="evidence" value="ECO:0007669"/>
    <property type="project" value="UniProtKB-KW"/>
</dbReference>
<dbReference type="GO" id="GO:0005471">
    <property type="term" value="F:ATP:ADP antiporter activity"/>
    <property type="evidence" value="ECO:0007669"/>
    <property type="project" value="InterPro"/>
</dbReference>
<dbReference type="InterPro" id="IPR004667">
    <property type="entry name" value="ADP_ATP_car_bac_type"/>
</dbReference>
<dbReference type="NCBIfam" id="TIGR00769">
    <property type="entry name" value="AAA"/>
    <property type="match status" value="1"/>
</dbReference>
<dbReference type="PANTHER" id="PTHR31187">
    <property type="match status" value="1"/>
</dbReference>
<dbReference type="PANTHER" id="PTHR31187:SF1">
    <property type="entry name" value="ADP,ATP CARRIER PROTEIN 1"/>
    <property type="match status" value="1"/>
</dbReference>
<dbReference type="Pfam" id="PF03219">
    <property type="entry name" value="TLC"/>
    <property type="match status" value="1"/>
</dbReference>